<protein>
    <recommendedName>
        <fullName>Peptide methionine sulfoxide reductase MsrA 2</fullName>
        <shortName>Protein-methionine-S-oxide reductase 2</shortName>
        <ecNumber>1.8.4.11</ecNumber>
    </recommendedName>
    <alternativeName>
        <fullName>Peptide-methionine (S)-S-oxide reductase 2</fullName>
        <shortName>Peptide Met(O) reductase 2</shortName>
    </alternativeName>
</protein>
<name>MSRA2_STAAN</name>
<comment type="function">
    <text evidence="1">Has an important function as a repair enzyme for proteins that have been inactivated by oxidation. Catalyzes the reversible oxidation-reduction of methionine sulfoxide in proteins to methionine (By similarity).</text>
</comment>
<comment type="catalytic activity">
    <reaction>
        <text>L-methionyl-[protein] + [thioredoxin]-disulfide + H2O = L-methionyl-(S)-S-oxide-[protein] + [thioredoxin]-dithiol</text>
        <dbReference type="Rhea" id="RHEA:14217"/>
        <dbReference type="Rhea" id="RHEA-COMP:10698"/>
        <dbReference type="Rhea" id="RHEA-COMP:10700"/>
        <dbReference type="Rhea" id="RHEA-COMP:12313"/>
        <dbReference type="Rhea" id="RHEA-COMP:12315"/>
        <dbReference type="ChEBI" id="CHEBI:15377"/>
        <dbReference type="ChEBI" id="CHEBI:16044"/>
        <dbReference type="ChEBI" id="CHEBI:29950"/>
        <dbReference type="ChEBI" id="CHEBI:44120"/>
        <dbReference type="ChEBI" id="CHEBI:50058"/>
        <dbReference type="EC" id="1.8.4.11"/>
    </reaction>
</comment>
<comment type="catalytic activity">
    <reaction>
        <text>[thioredoxin]-disulfide + L-methionine + H2O = L-methionine (S)-S-oxide + [thioredoxin]-dithiol</text>
        <dbReference type="Rhea" id="RHEA:19993"/>
        <dbReference type="Rhea" id="RHEA-COMP:10698"/>
        <dbReference type="Rhea" id="RHEA-COMP:10700"/>
        <dbReference type="ChEBI" id="CHEBI:15377"/>
        <dbReference type="ChEBI" id="CHEBI:29950"/>
        <dbReference type="ChEBI" id="CHEBI:50058"/>
        <dbReference type="ChEBI" id="CHEBI:57844"/>
        <dbReference type="ChEBI" id="CHEBI:58772"/>
        <dbReference type="EC" id="1.8.4.11"/>
    </reaction>
</comment>
<comment type="similarity">
    <text evidence="2">Belongs to the MsrA Met sulfoxide reductase family.</text>
</comment>
<dbReference type="EC" id="1.8.4.11"/>
<dbReference type="EMBL" id="BA000018">
    <property type="protein sequence ID" value="BAB42517.1"/>
    <property type="molecule type" value="Genomic_DNA"/>
</dbReference>
<dbReference type="PIR" id="H89919">
    <property type="entry name" value="H89919"/>
</dbReference>
<dbReference type="SMR" id="P65446"/>
<dbReference type="EnsemblBacteria" id="BAB42517">
    <property type="protein sequence ID" value="BAB42517"/>
    <property type="gene ID" value="BAB42517"/>
</dbReference>
<dbReference type="KEGG" id="sau:SA1257"/>
<dbReference type="HOGENOM" id="CLU_031040_10_1_9"/>
<dbReference type="GO" id="GO:0033744">
    <property type="term" value="F:L-methionine:thioredoxin-disulfide S-oxidoreductase activity"/>
    <property type="evidence" value="ECO:0007669"/>
    <property type="project" value="RHEA"/>
</dbReference>
<dbReference type="GO" id="GO:0008113">
    <property type="term" value="F:peptide-methionine (S)-S-oxide reductase activity"/>
    <property type="evidence" value="ECO:0007669"/>
    <property type="project" value="UniProtKB-UniRule"/>
</dbReference>
<dbReference type="GO" id="GO:0036211">
    <property type="term" value="P:protein modification process"/>
    <property type="evidence" value="ECO:0007669"/>
    <property type="project" value="UniProtKB-UniRule"/>
</dbReference>
<dbReference type="FunFam" id="3.30.1060.10:FF:000003">
    <property type="entry name" value="Peptide methionine sulfoxide reductase MsrA"/>
    <property type="match status" value="1"/>
</dbReference>
<dbReference type="Gene3D" id="3.30.1060.10">
    <property type="entry name" value="Peptide methionine sulphoxide reductase MsrA"/>
    <property type="match status" value="1"/>
</dbReference>
<dbReference type="HAMAP" id="MF_01401">
    <property type="entry name" value="MsrA"/>
    <property type="match status" value="1"/>
</dbReference>
<dbReference type="InterPro" id="IPR002569">
    <property type="entry name" value="Met_Sox_Rdtase_MsrA_dom"/>
</dbReference>
<dbReference type="InterPro" id="IPR036509">
    <property type="entry name" value="Met_Sox_Rdtase_MsrA_sf"/>
</dbReference>
<dbReference type="NCBIfam" id="TIGR00401">
    <property type="entry name" value="msrA"/>
    <property type="match status" value="1"/>
</dbReference>
<dbReference type="PANTHER" id="PTHR43774">
    <property type="entry name" value="PEPTIDE METHIONINE SULFOXIDE REDUCTASE"/>
    <property type="match status" value="1"/>
</dbReference>
<dbReference type="PANTHER" id="PTHR43774:SF1">
    <property type="entry name" value="PEPTIDE METHIONINE SULFOXIDE REDUCTASE MSRA 2"/>
    <property type="match status" value="1"/>
</dbReference>
<dbReference type="Pfam" id="PF01625">
    <property type="entry name" value="PMSR"/>
    <property type="match status" value="1"/>
</dbReference>
<dbReference type="SUPFAM" id="SSF55068">
    <property type="entry name" value="Peptide methionine sulfoxide reductase"/>
    <property type="match status" value="1"/>
</dbReference>
<accession>P65446</accession>
<accession>Q99U63</accession>
<gene>
    <name type="primary">msrA2</name>
    <name type="ordered locus">SA1257</name>
</gene>
<evidence type="ECO:0000250" key="1"/>
<evidence type="ECO:0000305" key="2"/>
<keyword id="KW-0560">Oxidoreductase</keyword>
<proteinExistence type="evidence at protein level"/>
<reference key="1">
    <citation type="journal article" date="2001" name="Lancet">
        <title>Whole genome sequencing of meticillin-resistant Staphylococcus aureus.</title>
        <authorList>
            <person name="Kuroda M."/>
            <person name="Ohta T."/>
            <person name="Uchiyama I."/>
            <person name="Baba T."/>
            <person name="Yuzawa H."/>
            <person name="Kobayashi I."/>
            <person name="Cui L."/>
            <person name="Oguchi A."/>
            <person name="Aoki K."/>
            <person name="Nagai Y."/>
            <person name="Lian J.-Q."/>
            <person name="Ito T."/>
            <person name="Kanamori M."/>
            <person name="Matsumaru H."/>
            <person name="Maruyama A."/>
            <person name="Murakami H."/>
            <person name="Hosoyama A."/>
            <person name="Mizutani-Ui Y."/>
            <person name="Takahashi N.K."/>
            <person name="Sawano T."/>
            <person name="Inoue R."/>
            <person name="Kaito C."/>
            <person name="Sekimizu K."/>
            <person name="Hirakawa H."/>
            <person name="Kuhara S."/>
            <person name="Goto S."/>
            <person name="Yabuzaki J."/>
            <person name="Kanehisa M."/>
            <person name="Yamashita A."/>
            <person name="Oshima K."/>
            <person name="Furuya K."/>
            <person name="Yoshino C."/>
            <person name="Shiba T."/>
            <person name="Hattori M."/>
            <person name="Ogasawara N."/>
            <person name="Hayashi H."/>
            <person name="Hiramatsu K."/>
        </authorList>
    </citation>
    <scope>NUCLEOTIDE SEQUENCE [LARGE SCALE GENOMIC DNA]</scope>
    <source>
        <strain>N315</strain>
    </source>
</reference>
<reference key="2">
    <citation type="submission" date="2007-10" db="UniProtKB">
        <title>Shotgun proteomic analysis of total and membrane protein extracts of S. aureus strain N315.</title>
        <authorList>
            <person name="Vaezzadeh A.R."/>
            <person name="Deshusses J."/>
            <person name="Lescuyer P."/>
            <person name="Hochstrasser D.F."/>
        </authorList>
    </citation>
    <scope>IDENTIFICATION BY MASS SPECTROMETRY [LARGE SCALE ANALYSIS]</scope>
    <source>
        <strain>N315</strain>
    </source>
</reference>
<sequence>MTKEYATLAGGCFWCMVKPFTSYPGIKSVVSGYSGGHVDNPTYEQVCTNKTGHVEAVQITFDPEVTSFENILDIYFKTFDPTDDQGQFFDRGESYQPVIFYHDEHQKKAAEFKKQQLNEQGIFKKPVITPIKPYKNFYPAEDYHQDYYKKNPVHYYQYQRGSGRKAFIESHWGNQNA</sequence>
<feature type="chain" id="PRO_0000138584" description="Peptide methionine sulfoxide reductase MsrA 2">
    <location>
        <begin position="1"/>
        <end position="177"/>
    </location>
</feature>
<feature type="active site" evidence="1">
    <location>
        <position position="12"/>
    </location>
</feature>
<organism>
    <name type="scientific">Staphylococcus aureus (strain N315)</name>
    <dbReference type="NCBI Taxonomy" id="158879"/>
    <lineage>
        <taxon>Bacteria</taxon>
        <taxon>Bacillati</taxon>
        <taxon>Bacillota</taxon>
        <taxon>Bacilli</taxon>
        <taxon>Bacillales</taxon>
        <taxon>Staphylococcaceae</taxon>
        <taxon>Staphylococcus</taxon>
    </lineage>
</organism>